<reference key="1">
    <citation type="journal article" date="2001" name="Science">
        <title>The genome of the natural genetic engineer Agrobacterium tumefaciens C58.</title>
        <authorList>
            <person name="Wood D.W."/>
            <person name="Setubal J.C."/>
            <person name="Kaul R."/>
            <person name="Monks D.E."/>
            <person name="Kitajima J.P."/>
            <person name="Okura V.K."/>
            <person name="Zhou Y."/>
            <person name="Chen L."/>
            <person name="Wood G.E."/>
            <person name="Almeida N.F. Jr."/>
            <person name="Woo L."/>
            <person name="Chen Y."/>
            <person name="Paulsen I.T."/>
            <person name="Eisen J.A."/>
            <person name="Karp P.D."/>
            <person name="Bovee D. Sr."/>
            <person name="Chapman P."/>
            <person name="Clendenning J."/>
            <person name="Deatherage G."/>
            <person name="Gillet W."/>
            <person name="Grant C."/>
            <person name="Kutyavin T."/>
            <person name="Levy R."/>
            <person name="Li M.-J."/>
            <person name="McClelland E."/>
            <person name="Palmieri A."/>
            <person name="Raymond C."/>
            <person name="Rouse G."/>
            <person name="Saenphimmachak C."/>
            <person name="Wu Z."/>
            <person name="Romero P."/>
            <person name="Gordon D."/>
            <person name="Zhang S."/>
            <person name="Yoo H."/>
            <person name="Tao Y."/>
            <person name="Biddle P."/>
            <person name="Jung M."/>
            <person name="Krespan W."/>
            <person name="Perry M."/>
            <person name="Gordon-Kamm B."/>
            <person name="Liao L."/>
            <person name="Kim S."/>
            <person name="Hendrick C."/>
            <person name="Zhao Z.-Y."/>
            <person name="Dolan M."/>
            <person name="Chumley F."/>
            <person name="Tingey S.V."/>
            <person name="Tomb J.-F."/>
            <person name="Gordon M.P."/>
            <person name="Olson M.V."/>
            <person name="Nester E.W."/>
        </authorList>
    </citation>
    <scope>NUCLEOTIDE SEQUENCE [LARGE SCALE GENOMIC DNA]</scope>
    <source>
        <strain>C58 / ATCC 33970</strain>
    </source>
</reference>
<reference key="2">
    <citation type="journal article" date="2001" name="Science">
        <title>Genome sequence of the plant pathogen and biotechnology agent Agrobacterium tumefaciens C58.</title>
        <authorList>
            <person name="Goodner B."/>
            <person name="Hinkle G."/>
            <person name="Gattung S."/>
            <person name="Miller N."/>
            <person name="Blanchard M."/>
            <person name="Qurollo B."/>
            <person name="Goldman B.S."/>
            <person name="Cao Y."/>
            <person name="Askenazi M."/>
            <person name="Halling C."/>
            <person name="Mullin L."/>
            <person name="Houmiel K."/>
            <person name="Gordon J."/>
            <person name="Vaudin M."/>
            <person name="Iartchouk O."/>
            <person name="Epp A."/>
            <person name="Liu F."/>
            <person name="Wollam C."/>
            <person name="Allinger M."/>
            <person name="Doughty D."/>
            <person name="Scott C."/>
            <person name="Lappas C."/>
            <person name="Markelz B."/>
            <person name="Flanagan C."/>
            <person name="Crowell C."/>
            <person name="Gurson J."/>
            <person name="Lomo C."/>
            <person name="Sear C."/>
            <person name="Strub G."/>
            <person name="Cielo C."/>
            <person name="Slater S."/>
        </authorList>
    </citation>
    <scope>NUCLEOTIDE SEQUENCE [LARGE SCALE GENOMIC DNA]</scope>
    <source>
        <strain>C58 / ATCC 33970</strain>
    </source>
</reference>
<feature type="chain" id="PRO_0000092683" description="Phosphonates import ATP-binding protein PhnC">
    <location>
        <begin position="1"/>
        <end position="286"/>
    </location>
</feature>
<feature type="domain" description="ABC transporter" evidence="1">
    <location>
        <begin position="3"/>
        <end position="246"/>
    </location>
</feature>
<feature type="binding site" evidence="1">
    <location>
        <begin position="35"/>
        <end position="42"/>
    </location>
    <ligand>
        <name>ATP</name>
        <dbReference type="ChEBI" id="CHEBI:30616"/>
    </ligand>
</feature>
<keyword id="KW-0067">ATP-binding</keyword>
<keyword id="KW-0997">Cell inner membrane</keyword>
<keyword id="KW-1003">Cell membrane</keyword>
<keyword id="KW-0472">Membrane</keyword>
<keyword id="KW-0547">Nucleotide-binding</keyword>
<keyword id="KW-0918">Phosphonate transport</keyword>
<keyword id="KW-1185">Reference proteome</keyword>
<keyword id="KW-1278">Translocase</keyword>
<keyword id="KW-0813">Transport</keyword>
<organism>
    <name type="scientific">Agrobacterium fabrum (strain C58 / ATCC 33970)</name>
    <name type="common">Agrobacterium tumefaciens (strain C58)</name>
    <dbReference type="NCBI Taxonomy" id="176299"/>
    <lineage>
        <taxon>Bacteria</taxon>
        <taxon>Pseudomonadati</taxon>
        <taxon>Pseudomonadota</taxon>
        <taxon>Alphaproteobacteria</taxon>
        <taxon>Hyphomicrobiales</taxon>
        <taxon>Rhizobiaceae</taxon>
        <taxon>Rhizobium/Agrobacterium group</taxon>
        <taxon>Agrobacterium</taxon>
        <taxon>Agrobacterium tumefaciens complex</taxon>
    </lineage>
</organism>
<comment type="function">
    <text evidence="1">Part of the ABC transporter complex PhnCDE involved in phosphonates import. Responsible for energy coupling to the transport system.</text>
</comment>
<comment type="catalytic activity">
    <reaction evidence="1">
        <text>phosphonate(out) + ATP + H2O = phosphonate(in) + ADP + phosphate + H(+)</text>
        <dbReference type="Rhea" id="RHEA:18065"/>
        <dbReference type="ChEBI" id="CHEBI:15377"/>
        <dbReference type="ChEBI" id="CHEBI:15378"/>
        <dbReference type="ChEBI" id="CHEBI:16215"/>
        <dbReference type="ChEBI" id="CHEBI:30616"/>
        <dbReference type="ChEBI" id="CHEBI:43474"/>
        <dbReference type="ChEBI" id="CHEBI:456216"/>
        <dbReference type="EC" id="7.3.2.2"/>
    </reaction>
</comment>
<comment type="subunit">
    <text evidence="1">The complex is composed of two ATP-binding proteins (PhnC), two transmembrane proteins (PhnE) and a solute-binding protein (PhnD).</text>
</comment>
<comment type="subcellular location">
    <subcellularLocation>
        <location evidence="1">Cell inner membrane</location>
        <topology evidence="1">Peripheral membrane protein</topology>
    </subcellularLocation>
</comment>
<comment type="similarity">
    <text evidence="1">Belongs to the ABC transporter superfamily. Phosphonates importer (TC 3.A.1.9.1) family.</text>
</comment>
<proteinExistence type="inferred from homology"/>
<name>PHNC_AGRFC</name>
<dbReference type="EC" id="7.3.2.2" evidence="1"/>
<dbReference type="EMBL" id="AE007869">
    <property type="protein sequence ID" value="AAK85994.2"/>
    <property type="molecule type" value="Genomic_DNA"/>
</dbReference>
<dbReference type="PIR" id="A97380">
    <property type="entry name" value="A97380"/>
</dbReference>
<dbReference type="PIR" id="AH2597">
    <property type="entry name" value="AH2597"/>
</dbReference>
<dbReference type="RefSeq" id="NP_353209.2">
    <property type="nucleotide sequence ID" value="NC_003062.2"/>
</dbReference>
<dbReference type="RefSeq" id="WP_010970704.1">
    <property type="nucleotide sequence ID" value="NC_003062.2"/>
</dbReference>
<dbReference type="SMR" id="Q8UIW7"/>
<dbReference type="STRING" id="176299.Atu0174"/>
<dbReference type="EnsemblBacteria" id="AAK85994">
    <property type="protein sequence ID" value="AAK85994"/>
    <property type="gene ID" value="Atu0174"/>
</dbReference>
<dbReference type="GeneID" id="1132212"/>
<dbReference type="KEGG" id="atu:Atu0174"/>
<dbReference type="PATRIC" id="fig|176299.10.peg.165"/>
<dbReference type="eggNOG" id="COG3638">
    <property type="taxonomic scope" value="Bacteria"/>
</dbReference>
<dbReference type="HOGENOM" id="CLU_000604_1_22_5"/>
<dbReference type="OrthoDB" id="9802264at2"/>
<dbReference type="PhylomeDB" id="Q8UIW7"/>
<dbReference type="BioCyc" id="AGRO:ATU0174-MONOMER"/>
<dbReference type="Proteomes" id="UP000000813">
    <property type="component" value="Chromosome circular"/>
</dbReference>
<dbReference type="GO" id="GO:0005886">
    <property type="term" value="C:plasma membrane"/>
    <property type="evidence" value="ECO:0007669"/>
    <property type="project" value="UniProtKB-SubCell"/>
</dbReference>
<dbReference type="GO" id="GO:0015416">
    <property type="term" value="F:ABC-type phosphonate transporter activity"/>
    <property type="evidence" value="ECO:0007669"/>
    <property type="project" value="UniProtKB-EC"/>
</dbReference>
<dbReference type="GO" id="GO:0005524">
    <property type="term" value="F:ATP binding"/>
    <property type="evidence" value="ECO:0007669"/>
    <property type="project" value="UniProtKB-KW"/>
</dbReference>
<dbReference type="GO" id="GO:0016887">
    <property type="term" value="F:ATP hydrolysis activity"/>
    <property type="evidence" value="ECO:0007669"/>
    <property type="project" value="InterPro"/>
</dbReference>
<dbReference type="CDD" id="cd03256">
    <property type="entry name" value="ABC_PhnC_transporter"/>
    <property type="match status" value="1"/>
</dbReference>
<dbReference type="Gene3D" id="3.40.50.300">
    <property type="entry name" value="P-loop containing nucleotide triphosphate hydrolases"/>
    <property type="match status" value="1"/>
</dbReference>
<dbReference type="InterPro" id="IPR003593">
    <property type="entry name" value="AAA+_ATPase"/>
</dbReference>
<dbReference type="InterPro" id="IPR003439">
    <property type="entry name" value="ABC_transporter-like_ATP-bd"/>
</dbReference>
<dbReference type="InterPro" id="IPR017871">
    <property type="entry name" value="ABC_transporter-like_CS"/>
</dbReference>
<dbReference type="InterPro" id="IPR012693">
    <property type="entry name" value="ABC_transpr_PhnC"/>
</dbReference>
<dbReference type="InterPro" id="IPR050086">
    <property type="entry name" value="MetN_ABC_transporter-like"/>
</dbReference>
<dbReference type="InterPro" id="IPR027417">
    <property type="entry name" value="P-loop_NTPase"/>
</dbReference>
<dbReference type="NCBIfam" id="TIGR02315">
    <property type="entry name" value="ABC_phnC"/>
    <property type="match status" value="1"/>
</dbReference>
<dbReference type="PANTHER" id="PTHR43166">
    <property type="entry name" value="AMINO ACID IMPORT ATP-BINDING PROTEIN"/>
    <property type="match status" value="1"/>
</dbReference>
<dbReference type="PANTHER" id="PTHR43166:SF6">
    <property type="entry name" value="PHOSPHONATES IMPORT ATP-BINDING PROTEIN PHNC"/>
    <property type="match status" value="1"/>
</dbReference>
<dbReference type="Pfam" id="PF00005">
    <property type="entry name" value="ABC_tran"/>
    <property type="match status" value="1"/>
</dbReference>
<dbReference type="SMART" id="SM00382">
    <property type="entry name" value="AAA"/>
    <property type="match status" value="1"/>
</dbReference>
<dbReference type="SUPFAM" id="SSF52540">
    <property type="entry name" value="P-loop containing nucleoside triphosphate hydrolases"/>
    <property type="match status" value="1"/>
</dbReference>
<dbReference type="PROSITE" id="PS00211">
    <property type="entry name" value="ABC_TRANSPORTER_1"/>
    <property type="match status" value="1"/>
</dbReference>
<dbReference type="PROSITE" id="PS50893">
    <property type="entry name" value="ABC_TRANSPORTER_2"/>
    <property type="match status" value="1"/>
</dbReference>
<dbReference type="PROSITE" id="PS51249">
    <property type="entry name" value="PHNC"/>
    <property type="match status" value="1"/>
</dbReference>
<accession>Q8UIW7</accession>
<accession>Q7D215</accession>
<gene>
    <name evidence="1" type="primary">phnC</name>
    <name type="ordered locus">Atu0174</name>
    <name type="ORF">AGR_C_290</name>
</gene>
<sequence length="286" mass="30825">MSFHLKQVTRRFGKHTAVDSVDVEIPQGQMVGVIGRSGAGKSTLLRMINRLVDPSSGSIHFNDTEVSSLKGAALRAWQRDCAMIFQQFNLVPRLDVLTNVMLGRLNHRSTALSLFNIFSHEERLMAIAALERLGIEHVAMQAAGTLSGGQQQRVAIARALMQSPKMVLADEPIASLDPLNAKIVMDALRDINEREGITVITNLHTLDTARNYCERIIGMSQGRVVFDGTPAELTAAAVTEIYGTDSQGSGIDETMTSTSINIPGAQLAARPVQQSAGPEPLALAGL</sequence>
<evidence type="ECO:0000255" key="1">
    <source>
        <dbReference type="HAMAP-Rule" id="MF_01713"/>
    </source>
</evidence>
<protein>
    <recommendedName>
        <fullName evidence="1">Phosphonates import ATP-binding protein PhnC</fullName>
        <ecNumber evidence="1">7.3.2.2</ecNumber>
    </recommendedName>
</protein>